<proteinExistence type="inferred from homology"/>
<comment type="function">
    <text evidence="1">Catalyzes the attachment of threonine to tRNA(Thr) in a two-step reaction: L-threonine is first activated by ATP to form Thr-AMP and then transferred to the acceptor end of tRNA(Thr). Also edits incorrectly charged L-seryl-tRNA(Thr).</text>
</comment>
<comment type="catalytic activity">
    <reaction evidence="1">
        <text>tRNA(Thr) + L-threonine + ATP = L-threonyl-tRNA(Thr) + AMP + diphosphate + H(+)</text>
        <dbReference type="Rhea" id="RHEA:24624"/>
        <dbReference type="Rhea" id="RHEA-COMP:9670"/>
        <dbReference type="Rhea" id="RHEA-COMP:9704"/>
        <dbReference type="ChEBI" id="CHEBI:15378"/>
        <dbReference type="ChEBI" id="CHEBI:30616"/>
        <dbReference type="ChEBI" id="CHEBI:33019"/>
        <dbReference type="ChEBI" id="CHEBI:57926"/>
        <dbReference type="ChEBI" id="CHEBI:78442"/>
        <dbReference type="ChEBI" id="CHEBI:78534"/>
        <dbReference type="ChEBI" id="CHEBI:456215"/>
        <dbReference type="EC" id="6.1.1.3"/>
    </reaction>
</comment>
<comment type="cofactor">
    <cofactor evidence="1">
        <name>Zn(2+)</name>
        <dbReference type="ChEBI" id="CHEBI:29105"/>
    </cofactor>
    <text evidence="1">Binds 1 zinc ion per subunit.</text>
</comment>
<comment type="subunit">
    <text evidence="1">Homodimer.</text>
</comment>
<comment type="subcellular location">
    <subcellularLocation>
        <location evidence="1">Cytoplasm</location>
    </subcellularLocation>
</comment>
<comment type="similarity">
    <text evidence="1">Belongs to the class-II aminoacyl-tRNA synthetase family.</text>
</comment>
<gene>
    <name evidence="1" type="primary">thrS</name>
    <name type="ordered locus">BbuZS7_0744</name>
</gene>
<accession>B7J0G5</accession>
<reference key="1">
    <citation type="journal article" date="2011" name="J. Bacteriol.">
        <title>Whole-genome sequences of thirteen isolates of Borrelia burgdorferi.</title>
        <authorList>
            <person name="Schutzer S.E."/>
            <person name="Fraser-Liggett C.M."/>
            <person name="Casjens S.R."/>
            <person name="Qiu W.G."/>
            <person name="Dunn J.J."/>
            <person name="Mongodin E.F."/>
            <person name="Luft B.J."/>
        </authorList>
    </citation>
    <scope>NUCLEOTIDE SEQUENCE [LARGE SCALE GENOMIC DNA]</scope>
    <source>
        <strain>ZS7</strain>
    </source>
</reference>
<keyword id="KW-0030">Aminoacyl-tRNA synthetase</keyword>
<keyword id="KW-0067">ATP-binding</keyword>
<keyword id="KW-0963">Cytoplasm</keyword>
<keyword id="KW-0436">Ligase</keyword>
<keyword id="KW-0479">Metal-binding</keyword>
<keyword id="KW-0547">Nucleotide-binding</keyword>
<keyword id="KW-0648">Protein biosynthesis</keyword>
<keyword id="KW-0694">RNA-binding</keyword>
<keyword id="KW-0820">tRNA-binding</keyword>
<keyword id="KW-0862">Zinc</keyword>
<sequence>MSKDLDKEDILYKKRHSIAHVMAEAVLDLFPNTKIAIGPPIKDGFYYDFEFKKQITEDSLLDIENRMREILKTGSSFEKEIISVEQALEIFKDEPYKIDLIKNFDLQNEVSIYKSHNFVDLCRGPHVENMNKIDPKAFKLTSIAGAYWRGSEKNPMLTRIYGTLWNNEKELRSYLNLREEIKKRDHRKLGKELDLFSIHEEIGPGLVFFHPNGAKIRALIEDFWREEHSKNGYDILFTPHIGKSWLWQTSGHLDFYKDSMFEKIEMDKSDYYLKPMNCPFHIAIYNTGKHSYRDLPFRWAELGTVYRYEKIGALHGMMRARGFTQDDAHIICTHSQVLDEIKEVLRFAIYMWSKFGFSNPKAYLSTKPDKSVGNDSDWEMSLKVLEETLSDFEVPYEIDKGGGAFYGPKIDLKIVDSLEREWQMSTIQFDFNLPERFNMTYTAEDGKEKRPFMIHRALLGSIERFFGILVEHYGGAFPLWLSPVQVVIIPVNNIVEDYAIKVFNKFKNEGIRIKLDNSSSRMNAKIREYQAKKIPYMFIIGEREATEERISIRTRTNEQINGMKLDEALKFILFKIRDKEI</sequence>
<name>SYT_BORBZ</name>
<evidence type="ECO:0000255" key="1">
    <source>
        <dbReference type="HAMAP-Rule" id="MF_00184"/>
    </source>
</evidence>
<protein>
    <recommendedName>
        <fullName evidence="1">Threonine--tRNA ligase</fullName>
        <ecNumber evidence="1">6.1.1.3</ecNumber>
    </recommendedName>
    <alternativeName>
        <fullName evidence="1">Threonyl-tRNA synthetase</fullName>
        <shortName evidence="1">ThrRS</shortName>
    </alternativeName>
</protein>
<feature type="chain" id="PRO_1000199530" description="Threonine--tRNA ligase">
    <location>
        <begin position="1"/>
        <end position="581"/>
    </location>
</feature>
<feature type="region of interest" description="Catalytic" evidence="1">
    <location>
        <begin position="185"/>
        <end position="478"/>
    </location>
</feature>
<feature type="binding site" evidence="1">
    <location>
        <position position="278"/>
    </location>
    <ligand>
        <name>Zn(2+)</name>
        <dbReference type="ChEBI" id="CHEBI:29105"/>
    </ligand>
</feature>
<feature type="binding site" evidence="1">
    <location>
        <position position="329"/>
    </location>
    <ligand>
        <name>Zn(2+)</name>
        <dbReference type="ChEBI" id="CHEBI:29105"/>
    </ligand>
</feature>
<feature type="binding site" evidence="1">
    <location>
        <position position="455"/>
    </location>
    <ligand>
        <name>Zn(2+)</name>
        <dbReference type="ChEBI" id="CHEBI:29105"/>
    </ligand>
</feature>
<organism>
    <name type="scientific">Borreliella burgdorferi (strain ZS7)</name>
    <name type="common">Borrelia burgdorferi</name>
    <dbReference type="NCBI Taxonomy" id="445985"/>
    <lineage>
        <taxon>Bacteria</taxon>
        <taxon>Pseudomonadati</taxon>
        <taxon>Spirochaetota</taxon>
        <taxon>Spirochaetia</taxon>
        <taxon>Spirochaetales</taxon>
        <taxon>Borreliaceae</taxon>
        <taxon>Borreliella</taxon>
    </lineage>
</organism>
<dbReference type="EC" id="6.1.1.3" evidence="1"/>
<dbReference type="EMBL" id="CP001205">
    <property type="protein sequence ID" value="ACK74495.1"/>
    <property type="molecule type" value="Genomic_DNA"/>
</dbReference>
<dbReference type="RefSeq" id="WP_002665762.1">
    <property type="nucleotide sequence ID" value="NC_011728.1"/>
</dbReference>
<dbReference type="SMR" id="B7J0G5"/>
<dbReference type="KEGG" id="bbz:BbuZS7_0744"/>
<dbReference type="HOGENOM" id="CLU_008554_0_1_12"/>
<dbReference type="Proteomes" id="UP000006901">
    <property type="component" value="Chromosome"/>
</dbReference>
<dbReference type="GO" id="GO:0005737">
    <property type="term" value="C:cytoplasm"/>
    <property type="evidence" value="ECO:0007669"/>
    <property type="project" value="UniProtKB-SubCell"/>
</dbReference>
<dbReference type="GO" id="GO:0005524">
    <property type="term" value="F:ATP binding"/>
    <property type="evidence" value="ECO:0007669"/>
    <property type="project" value="UniProtKB-UniRule"/>
</dbReference>
<dbReference type="GO" id="GO:0046872">
    <property type="term" value="F:metal ion binding"/>
    <property type="evidence" value="ECO:0007669"/>
    <property type="project" value="UniProtKB-KW"/>
</dbReference>
<dbReference type="GO" id="GO:0004829">
    <property type="term" value="F:threonine-tRNA ligase activity"/>
    <property type="evidence" value="ECO:0007669"/>
    <property type="project" value="UniProtKB-UniRule"/>
</dbReference>
<dbReference type="GO" id="GO:0000049">
    <property type="term" value="F:tRNA binding"/>
    <property type="evidence" value="ECO:0007669"/>
    <property type="project" value="UniProtKB-KW"/>
</dbReference>
<dbReference type="GO" id="GO:0006435">
    <property type="term" value="P:threonyl-tRNA aminoacylation"/>
    <property type="evidence" value="ECO:0007669"/>
    <property type="project" value="UniProtKB-UniRule"/>
</dbReference>
<dbReference type="CDD" id="cd00860">
    <property type="entry name" value="ThrRS_anticodon"/>
    <property type="match status" value="1"/>
</dbReference>
<dbReference type="CDD" id="cd00771">
    <property type="entry name" value="ThrRS_core"/>
    <property type="match status" value="1"/>
</dbReference>
<dbReference type="FunFam" id="3.30.930.10:FF:000019">
    <property type="entry name" value="Threonine--tRNA ligase"/>
    <property type="match status" value="1"/>
</dbReference>
<dbReference type="FunFam" id="3.40.50.800:FF:000001">
    <property type="entry name" value="Threonine--tRNA ligase"/>
    <property type="match status" value="1"/>
</dbReference>
<dbReference type="FunFam" id="3.30.980.10:FF:000005">
    <property type="entry name" value="Threonyl-tRNA synthetase, mitochondrial"/>
    <property type="match status" value="1"/>
</dbReference>
<dbReference type="Gene3D" id="3.30.54.20">
    <property type="match status" value="1"/>
</dbReference>
<dbReference type="Gene3D" id="3.40.50.800">
    <property type="entry name" value="Anticodon-binding domain"/>
    <property type="match status" value="1"/>
</dbReference>
<dbReference type="Gene3D" id="3.30.930.10">
    <property type="entry name" value="Bira Bifunctional Protein, Domain 2"/>
    <property type="match status" value="1"/>
</dbReference>
<dbReference type="Gene3D" id="3.30.980.10">
    <property type="entry name" value="Threonyl-trna Synthetase, Chain A, domain 2"/>
    <property type="match status" value="1"/>
</dbReference>
<dbReference type="HAMAP" id="MF_00184">
    <property type="entry name" value="Thr_tRNA_synth"/>
    <property type="match status" value="1"/>
</dbReference>
<dbReference type="InterPro" id="IPR002314">
    <property type="entry name" value="aa-tRNA-synt_IIb"/>
</dbReference>
<dbReference type="InterPro" id="IPR006195">
    <property type="entry name" value="aa-tRNA-synth_II"/>
</dbReference>
<dbReference type="InterPro" id="IPR045864">
    <property type="entry name" value="aa-tRNA-synth_II/BPL/LPL"/>
</dbReference>
<dbReference type="InterPro" id="IPR004154">
    <property type="entry name" value="Anticodon-bd"/>
</dbReference>
<dbReference type="InterPro" id="IPR036621">
    <property type="entry name" value="Anticodon-bd_dom_sf"/>
</dbReference>
<dbReference type="InterPro" id="IPR002320">
    <property type="entry name" value="Thr-tRNA-ligase_IIa"/>
</dbReference>
<dbReference type="InterPro" id="IPR018163">
    <property type="entry name" value="Thr/Ala-tRNA-synth_IIc_edit"/>
</dbReference>
<dbReference type="InterPro" id="IPR047246">
    <property type="entry name" value="ThrRS_anticodon"/>
</dbReference>
<dbReference type="InterPro" id="IPR033728">
    <property type="entry name" value="ThrRS_core"/>
</dbReference>
<dbReference type="InterPro" id="IPR012947">
    <property type="entry name" value="tRNA_SAD"/>
</dbReference>
<dbReference type="NCBIfam" id="TIGR00418">
    <property type="entry name" value="thrS"/>
    <property type="match status" value="1"/>
</dbReference>
<dbReference type="PANTHER" id="PTHR11451:SF44">
    <property type="entry name" value="THREONINE--TRNA LIGASE, CHLOROPLASTIC_MITOCHONDRIAL 2"/>
    <property type="match status" value="1"/>
</dbReference>
<dbReference type="PANTHER" id="PTHR11451">
    <property type="entry name" value="THREONINE-TRNA LIGASE"/>
    <property type="match status" value="1"/>
</dbReference>
<dbReference type="Pfam" id="PF03129">
    <property type="entry name" value="HGTP_anticodon"/>
    <property type="match status" value="1"/>
</dbReference>
<dbReference type="Pfam" id="PF00587">
    <property type="entry name" value="tRNA-synt_2b"/>
    <property type="match status" value="1"/>
</dbReference>
<dbReference type="Pfam" id="PF07973">
    <property type="entry name" value="tRNA_SAD"/>
    <property type="match status" value="1"/>
</dbReference>
<dbReference type="PRINTS" id="PR01047">
    <property type="entry name" value="TRNASYNTHTHR"/>
</dbReference>
<dbReference type="SMART" id="SM00863">
    <property type="entry name" value="tRNA_SAD"/>
    <property type="match status" value="1"/>
</dbReference>
<dbReference type="SUPFAM" id="SSF52954">
    <property type="entry name" value="Class II aaRS ABD-related"/>
    <property type="match status" value="1"/>
</dbReference>
<dbReference type="SUPFAM" id="SSF55681">
    <property type="entry name" value="Class II aaRS and biotin synthetases"/>
    <property type="match status" value="1"/>
</dbReference>
<dbReference type="SUPFAM" id="SSF55186">
    <property type="entry name" value="ThrRS/AlaRS common domain"/>
    <property type="match status" value="1"/>
</dbReference>
<dbReference type="PROSITE" id="PS50862">
    <property type="entry name" value="AA_TRNA_LIGASE_II"/>
    <property type="match status" value="1"/>
</dbReference>